<reference key="1">
    <citation type="journal article" date="2005" name="Nucleic Acids Res.">
        <title>Genome dynamics and diversity of Shigella species, the etiologic agents of bacillary dysentery.</title>
        <authorList>
            <person name="Yang F."/>
            <person name="Yang J."/>
            <person name="Zhang X."/>
            <person name="Chen L."/>
            <person name="Jiang Y."/>
            <person name="Yan Y."/>
            <person name="Tang X."/>
            <person name="Wang J."/>
            <person name="Xiong Z."/>
            <person name="Dong J."/>
            <person name="Xue Y."/>
            <person name="Zhu Y."/>
            <person name="Xu X."/>
            <person name="Sun L."/>
            <person name="Chen S."/>
            <person name="Nie H."/>
            <person name="Peng J."/>
            <person name="Xu J."/>
            <person name="Wang Y."/>
            <person name="Yuan Z."/>
            <person name="Wen Y."/>
            <person name="Yao Z."/>
            <person name="Shen Y."/>
            <person name="Qiang B."/>
            <person name="Hou Y."/>
            <person name="Yu J."/>
            <person name="Jin Q."/>
        </authorList>
    </citation>
    <scope>NUCLEOTIDE SEQUENCE [LARGE SCALE GENOMIC DNA]</scope>
    <source>
        <strain>Sb227</strain>
    </source>
</reference>
<proteinExistence type="inferred from homology"/>
<organism>
    <name type="scientific">Shigella boydii serotype 4 (strain Sb227)</name>
    <dbReference type="NCBI Taxonomy" id="300268"/>
    <lineage>
        <taxon>Bacteria</taxon>
        <taxon>Pseudomonadati</taxon>
        <taxon>Pseudomonadota</taxon>
        <taxon>Gammaproteobacteria</taxon>
        <taxon>Enterobacterales</taxon>
        <taxon>Enterobacteriaceae</taxon>
        <taxon>Shigella</taxon>
    </lineage>
</organism>
<gene>
    <name evidence="1" type="primary">cbpA</name>
    <name type="ordered locus">SBO_2231</name>
</gene>
<sequence length="306" mass="34425">MELKDYYAIMGVKPTDDLKTIKTAYRRLARKYHPDVSKEPDAEARFKEVAEAWEVLSDEQRRAEYDQMWQHRNDPQFNRQFHHGDGQSFNAEDFDDIFSSIFGQHARQSRQRPAARGHDIEIEVAVFLEETLTEHKRTISYNLPVYNAFGMIEQEIPKTLNVKIPAGVGNGQRIRLKGQGTPGENGGPNGDLWLVIHIAPHPLFDIVGQDLEIVVPVSPWEAALGAKVTVPTLKESILLTIPPGSQAGQRLRVKGKGLVSKKQTGDLYAVLKIVMPPKPDENTAALWQQLADAQSSFDPRKDWGKA</sequence>
<keyword id="KW-0143">Chaperone</keyword>
<keyword id="KW-0963">Cytoplasm</keyword>
<keyword id="KW-0238">DNA-binding</keyword>
<name>CBPA_SHIBS</name>
<comment type="function">
    <text evidence="1">DNA-binding protein that preferentially recognizes a curved DNA sequence. It is probably a functional analog of DnaJ; displays overlapping activities with DnaJ, but functions under different conditions, probably acting as a molecular chaperone in an adaptive response to environmental stresses other than heat shock. Lacks autonomous chaperone activity; binds native substrates and targets them for recognition by DnaK. Its activity is inhibited by the binding of CbpM.</text>
</comment>
<comment type="subcellular location">
    <subcellularLocation>
        <location evidence="1">Cytoplasm</location>
        <location evidence="1">Nucleoid</location>
    </subcellularLocation>
</comment>
<evidence type="ECO:0000255" key="1">
    <source>
        <dbReference type="HAMAP-Rule" id="MF_01154"/>
    </source>
</evidence>
<dbReference type="EMBL" id="CP000036">
    <property type="protein sequence ID" value="ABB66797.1"/>
    <property type="molecule type" value="Genomic_DNA"/>
</dbReference>
<dbReference type="RefSeq" id="WP_000420617.1">
    <property type="nucleotide sequence ID" value="NC_007613.1"/>
</dbReference>
<dbReference type="SMR" id="Q31YR1"/>
<dbReference type="KEGG" id="sbo:SBO_2231"/>
<dbReference type="HOGENOM" id="CLU_017633_0_0_6"/>
<dbReference type="Proteomes" id="UP000007067">
    <property type="component" value="Chromosome"/>
</dbReference>
<dbReference type="GO" id="GO:0005737">
    <property type="term" value="C:cytoplasm"/>
    <property type="evidence" value="ECO:0007669"/>
    <property type="project" value="UniProtKB-UniRule"/>
</dbReference>
<dbReference type="GO" id="GO:0009295">
    <property type="term" value="C:nucleoid"/>
    <property type="evidence" value="ECO:0007669"/>
    <property type="project" value="UniProtKB-SubCell"/>
</dbReference>
<dbReference type="GO" id="GO:0003681">
    <property type="term" value="F:bent DNA binding"/>
    <property type="evidence" value="ECO:0007669"/>
    <property type="project" value="UniProtKB-UniRule"/>
</dbReference>
<dbReference type="GO" id="GO:0051082">
    <property type="term" value="F:unfolded protein binding"/>
    <property type="evidence" value="ECO:0007669"/>
    <property type="project" value="InterPro"/>
</dbReference>
<dbReference type="GO" id="GO:0051085">
    <property type="term" value="P:chaperone cofactor-dependent protein refolding"/>
    <property type="evidence" value="ECO:0007669"/>
    <property type="project" value="TreeGrafter"/>
</dbReference>
<dbReference type="GO" id="GO:0042026">
    <property type="term" value="P:protein refolding"/>
    <property type="evidence" value="ECO:0007669"/>
    <property type="project" value="TreeGrafter"/>
</dbReference>
<dbReference type="CDD" id="cd06257">
    <property type="entry name" value="DnaJ"/>
    <property type="match status" value="1"/>
</dbReference>
<dbReference type="CDD" id="cd10747">
    <property type="entry name" value="DnaJ_C"/>
    <property type="match status" value="1"/>
</dbReference>
<dbReference type="FunFam" id="1.10.287.110:FF:000013">
    <property type="entry name" value="Curved DNA-binding protein"/>
    <property type="match status" value="1"/>
</dbReference>
<dbReference type="FunFam" id="2.60.260.20:FF:000008">
    <property type="entry name" value="Curved DNA-binding protein"/>
    <property type="match status" value="1"/>
</dbReference>
<dbReference type="FunFam" id="2.60.260.20:FF:000010">
    <property type="entry name" value="Curved DNA-binding protein"/>
    <property type="match status" value="1"/>
</dbReference>
<dbReference type="Gene3D" id="1.10.287.110">
    <property type="entry name" value="DnaJ domain"/>
    <property type="match status" value="1"/>
</dbReference>
<dbReference type="Gene3D" id="1.20.5.460">
    <property type="entry name" value="Single helix bin"/>
    <property type="match status" value="1"/>
</dbReference>
<dbReference type="Gene3D" id="2.60.260.20">
    <property type="entry name" value="Urease metallochaperone UreE, N-terminal domain"/>
    <property type="match status" value="2"/>
</dbReference>
<dbReference type="HAMAP" id="MF_01154">
    <property type="entry name" value="CbpA"/>
    <property type="match status" value="1"/>
</dbReference>
<dbReference type="InterPro" id="IPR023859">
    <property type="entry name" value="DNA-bd_curved-DNA"/>
</dbReference>
<dbReference type="InterPro" id="IPR002939">
    <property type="entry name" value="DnaJ_C"/>
</dbReference>
<dbReference type="InterPro" id="IPR001623">
    <property type="entry name" value="DnaJ_domain"/>
</dbReference>
<dbReference type="InterPro" id="IPR018253">
    <property type="entry name" value="DnaJ_domain_CS"/>
</dbReference>
<dbReference type="InterPro" id="IPR008971">
    <property type="entry name" value="HSP40/DnaJ_pept-bd"/>
</dbReference>
<dbReference type="InterPro" id="IPR036869">
    <property type="entry name" value="J_dom_sf"/>
</dbReference>
<dbReference type="NCBIfam" id="NF007618">
    <property type="entry name" value="PRK10266.1"/>
    <property type="match status" value="1"/>
</dbReference>
<dbReference type="PANTHER" id="PTHR43096">
    <property type="entry name" value="DNAJ HOMOLOG 1, MITOCHONDRIAL-RELATED"/>
    <property type="match status" value="1"/>
</dbReference>
<dbReference type="PANTHER" id="PTHR43096:SF52">
    <property type="entry name" value="DNAJ HOMOLOG 1, MITOCHONDRIAL-RELATED"/>
    <property type="match status" value="1"/>
</dbReference>
<dbReference type="Pfam" id="PF00226">
    <property type="entry name" value="DnaJ"/>
    <property type="match status" value="1"/>
</dbReference>
<dbReference type="Pfam" id="PF01556">
    <property type="entry name" value="DnaJ_C"/>
    <property type="match status" value="1"/>
</dbReference>
<dbReference type="PRINTS" id="PR00625">
    <property type="entry name" value="JDOMAIN"/>
</dbReference>
<dbReference type="SMART" id="SM00271">
    <property type="entry name" value="DnaJ"/>
    <property type="match status" value="1"/>
</dbReference>
<dbReference type="SUPFAM" id="SSF46565">
    <property type="entry name" value="Chaperone J-domain"/>
    <property type="match status" value="1"/>
</dbReference>
<dbReference type="SUPFAM" id="SSF49493">
    <property type="entry name" value="HSP40/DnaJ peptide-binding domain"/>
    <property type="match status" value="2"/>
</dbReference>
<dbReference type="PROSITE" id="PS00636">
    <property type="entry name" value="DNAJ_1"/>
    <property type="match status" value="1"/>
</dbReference>
<dbReference type="PROSITE" id="PS50076">
    <property type="entry name" value="DNAJ_2"/>
    <property type="match status" value="1"/>
</dbReference>
<accession>Q31YR1</accession>
<feature type="chain" id="PRO_0000286884" description="Curved DNA-binding protein">
    <location>
        <begin position="1"/>
        <end position="306"/>
    </location>
</feature>
<feature type="domain" description="J" evidence="1">
    <location>
        <begin position="5"/>
        <end position="69"/>
    </location>
</feature>
<protein>
    <recommendedName>
        <fullName evidence="1">Curved DNA-binding protein</fullName>
    </recommendedName>
</protein>